<reference key="1">
    <citation type="submission" date="2004-11" db="EMBL/GenBank/DDBJ databases">
        <title>Complete genome sequence of Thermus thermophilus HB8.</title>
        <authorList>
            <person name="Masui R."/>
            <person name="Kurokawa K."/>
            <person name="Nakagawa N."/>
            <person name="Tokunaga F."/>
            <person name="Koyama Y."/>
            <person name="Shibata T."/>
            <person name="Oshima T."/>
            <person name="Yokoyama S."/>
            <person name="Yasunaga T."/>
            <person name="Kuramitsu S."/>
        </authorList>
    </citation>
    <scope>NUCLEOTIDE SEQUENCE [LARGE SCALE GENOMIC DNA]</scope>
    <source>
        <strain>ATCC 27634 / DSM 579 / HB8</strain>
    </source>
</reference>
<reference key="2">
    <citation type="journal article" date="2007" name="Biosci. Biotechnol. Biochem.">
        <title>The first thermophilic alpha-oxoamine synthase family enzyme that has activities of 2-amino-3-ketobutyrate CoA ligase and 7-keto-8-aminopelargonic acid synthase: cloning and overexpression of the gene from an extreme thermophile, Thermus thermophilus, and characterization of its gene product.</title>
        <authorList>
            <person name="Kubota T."/>
            <person name="Shimono J."/>
            <person name="Kanameda C."/>
            <person name="Izumi Y."/>
        </authorList>
    </citation>
    <scope>FUNCTION</scope>
    <scope>CATALYTIC ACTIVITY</scope>
    <scope>BIOPHYSICOCHEMICAL PROPERTIES</scope>
    <scope>SUBSTRATE SPECIFICITY</scope>
    <scope>SUBUNIT</scope>
</reference>
<accession>Q5SHZ8</accession>
<keyword id="KW-0002">3D-structure</keyword>
<keyword id="KW-0012">Acyltransferase</keyword>
<keyword id="KW-0093">Biotin biosynthesis</keyword>
<keyword id="KW-0663">Pyridoxal phosphate</keyword>
<keyword id="KW-1185">Reference proteome</keyword>
<keyword id="KW-0808">Transferase</keyword>
<organism>
    <name type="scientific">Thermus thermophilus (strain ATCC 27634 / DSM 579 / HB8)</name>
    <dbReference type="NCBI Taxonomy" id="300852"/>
    <lineage>
        <taxon>Bacteria</taxon>
        <taxon>Thermotogati</taxon>
        <taxon>Deinococcota</taxon>
        <taxon>Deinococci</taxon>
        <taxon>Thermales</taxon>
        <taxon>Thermaceae</taxon>
        <taxon>Thermus</taxon>
    </lineage>
</organism>
<gene>
    <name type="ordered locus">TTHA1582</name>
</gene>
<comment type="function">
    <text evidence="1 2">Catalyzes the decarboxylative condensation of pimeloyl-[acyl-carrier protein] and L-alanine to produce 8-amino-7-oxononanoate (AON), [acyl-carrier protein], and carbon dioxide (By similarity). Can also use pimeloyl-CoA instead of pimeloyl-ACP as substrate. It also converts 2-amino-3-ketobutyrate and CoA to glycine and acetyl-CoA. Activity is also observed with the following combinations of substrates: acetyl-CoA and either L-alanine or L-serine, pimeloyl-CoA and either glycine or L-serine, and palmitoyl-CoA with L-alanine.</text>
</comment>
<comment type="catalytic activity">
    <reaction evidence="2">
        <text>6-carboxyhexanoyl-[ACP] + L-alanine + H(+) = (8S)-8-amino-7-oxononanoate + holo-[ACP] + CO2</text>
        <dbReference type="Rhea" id="RHEA:42288"/>
        <dbReference type="Rhea" id="RHEA-COMP:9685"/>
        <dbReference type="Rhea" id="RHEA-COMP:9955"/>
        <dbReference type="ChEBI" id="CHEBI:15378"/>
        <dbReference type="ChEBI" id="CHEBI:16526"/>
        <dbReference type="ChEBI" id="CHEBI:57972"/>
        <dbReference type="ChEBI" id="CHEBI:64479"/>
        <dbReference type="ChEBI" id="CHEBI:78846"/>
        <dbReference type="ChEBI" id="CHEBI:149468"/>
        <dbReference type="EC" id="2.3.1.47"/>
    </reaction>
</comment>
<comment type="catalytic activity">
    <reaction evidence="2">
        <text>glycine + acetyl-CoA = (2S)-2-amino-3-oxobutanoate + CoA</text>
        <dbReference type="Rhea" id="RHEA:20736"/>
        <dbReference type="ChEBI" id="CHEBI:57287"/>
        <dbReference type="ChEBI" id="CHEBI:57288"/>
        <dbReference type="ChEBI" id="CHEBI:57305"/>
        <dbReference type="ChEBI" id="CHEBI:78948"/>
        <dbReference type="EC" id="2.3.1.29"/>
    </reaction>
</comment>
<comment type="cofactor">
    <cofactor evidence="3">
        <name>pyridoxal 5'-phosphate</name>
        <dbReference type="ChEBI" id="CHEBI:597326"/>
    </cofactor>
</comment>
<comment type="biophysicochemical properties">
    <kinetics>
        <KM evidence="2">0.25 uM for L-glycine (with acetyl-CoA at pH 6 and at 70 degrees Celsius)</KM>
        <KM evidence="2">11.8 uM for L-alanine (with pimeloyl-CoA at pH 6 and at 70 degrees Celsius)</KM>
        <KM evidence="2">30 uM for acetyl-CoA (with L-glycine at pH 6 and at 70 degrees Celsius)</KM>
        <KM evidence="2">80 uM for pimeloyl-CoA (with L-alanine at pH 6 and at 70 degrees Celsius)</KM>
    </kinetics>
    <phDependence>
        <text evidence="2">Optimum pH is 6.0. Stable at pH 4.5-5.0, and a loss of less than 10% of the initial activity is observed after 1 hour of incubation at these pH.</text>
    </phDependence>
    <temperatureDependence>
        <text evidence="2">Optimum temperature is 70 degrees Celsius. Stable at temperatures up to 70 degrees Celsius, with a loss of less than 10% of the initial activity observed after 1 hour of incubation at these temperatures. The enzyme shows a half-life of 1 hour at 80 degrees Celsius.</text>
    </temperatureDependence>
</comment>
<comment type="pathway">
    <text>Cofactor biosynthesis; biotin biosynthesis.</text>
</comment>
<comment type="subunit">
    <text evidence="2">Homodimer.</text>
</comment>
<comment type="similarity">
    <text evidence="3">Belongs to the class-II pyridoxal-phosphate-dependent aminotransferase family.</text>
</comment>
<evidence type="ECO:0000250" key="1"/>
<evidence type="ECO:0000269" key="2">
    <source>
    </source>
</evidence>
<evidence type="ECO:0000305" key="3"/>
<evidence type="ECO:0007829" key="4">
    <source>
        <dbReference type="PDB" id="7POA"/>
    </source>
</evidence>
<evidence type="ECO:0007829" key="5">
    <source>
        <dbReference type="PDB" id="7POC"/>
    </source>
</evidence>
<name>BIKB_THET8</name>
<sequence>MSLDLRARVREELERLKREGLYISPKVLEAPQEPVTRVEGREVVNLASNNYLGFANHPYLKEKARQYLEKWGAGSGAVRTIAGTFTYHVELEEALARFKGTESALVLQSGFTANQGVLGALLKEGDVVFSDELNHASIIDGLRLTKATRLVFRHADVAHLEELLKAHDTDGLKLIVTDGVFSMDGDIAPLDKIVPLAKKYKAVVYVDDAHGSGVLGEKGKGTVHHFGFHQDPDVVQVATLSKAWAGIGGYAAGARELKDLLINKARPFLFSTSHPPAVVGALLGALELIEKEPERVERLWENTRYFKRELARLGYDTLGSQTPITPVLFGEAPLAFEASRLLLEEGVFAVGIGFPTVPRGKARIRNIVTAAHTKEMLDKALEAYEKVGKRLGIIR</sequence>
<proteinExistence type="evidence at protein level"/>
<protein>
    <recommendedName>
        <fullName>8-amino-7-oxononanoate synthase/2-amino-3-ketobutyrate coenzyme A ligase</fullName>
        <shortName>AONS/AKB ligase</shortName>
        <ecNumber>2.3.1.29</ecNumber>
        <ecNumber>2.3.1.47</ecNumber>
    </recommendedName>
    <alternativeName>
        <fullName>7-keto-8-amino-pelargonic acid synthase</fullName>
        <shortName>7-KAP synthase</shortName>
        <shortName>KAPA synthase</shortName>
    </alternativeName>
    <alternativeName>
        <fullName>8-amino-7-ketopelargonate synthase</fullName>
    </alternativeName>
    <alternativeName>
        <fullName>Alpha-oxoamine synthase</fullName>
    </alternativeName>
    <alternativeName>
        <fullName>Glycine acetyltransferase</fullName>
    </alternativeName>
</protein>
<dbReference type="EC" id="2.3.1.29"/>
<dbReference type="EC" id="2.3.1.47"/>
<dbReference type="EMBL" id="AP008226">
    <property type="protein sequence ID" value="BAD71405.1"/>
    <property type="molecule type" value="Genomic_DNA"/>
</dbReference>
<dbReference type="RefSeq" id="WP_011228785.1">
    <property type="nucleotide sequence ID" value="NC_006461.1"/>
</dbReference>
<dbReference type="RefSeq" id="YP_144848.1">
    <property type="nucleotide sequence ID" value="NC_006461.1"/>
</dbReference>
<dbReference type="PDB" id="7POA">
    <property type="method" value="X-ray"/>
    <property type="resolution" value="1.60 A"/>
    <property type="chains" value="A/B=2-395"/>
</dbReference>
<dbReference type="PDB" id="7POB">
    <property type="method" value="X-ray"/>
    <property type="resolution" value="2.00 A"/>
    <property type="chains" value="A/B/C/D=2-395"/>
</dbReference>
<dbReference type="PDB" id="7POC">
    <property type="method" value="X-ray"/>
    <property type="resolution" value="2.60 A"/>
    <property type="chains" value="A/B/C/D=2-395"/>
</dbReference>
<dbReference type="PDB" id="8S1Y">
    <property type="method" value="X-ray"/>
    <property type="resolution" value="1.50 A"/>
    <property type="chains" value="A/B=2-395"/>
</dbReference>
<dbReference type="PDBsum" id="7POA"/>
<dbReference type="PDBsum" id="7POB"/>
<dbReference type="PDBsum" id="7POC"/>
<dbReference type="PDBsum" id="8S1Y"/>
<dbReference type="SMR" id="Q5SHZ8"/>
<dbReference type="EnsemblBacteria" id="BAD71405">
    <property type="protein sequence ID" value="BAD71405"/>
    <property type="gene ID" value="BAD71405"/>
</dbReference>
<dbReference type="GeneID" id="3169187"/>
<dbReference type="KEGG" id="ttj:TTHA1582"/>
<dbReference type="PATRIC" id="fig|300852.9.peg.1553"/>
<dbReference type="eggNOG" id="COG0156">
    <property type="taxonomic scope" value="Bacteria"/>
</dbReference>
<dbReference type="HOGENOM" id="CLU_015846_11_0_0"/>
<dbReference type="PhylomeDB" id="Q5SHZ8"/>
<dbReference type="SABIO-RK" id="Q5SHZ8"/>
<dbReference type="UniPathway" id="UPA00078"/>
<dbReference type="Proteomes" id="UP000000532">
    <property type="component" value="Chromosome"/>
</dbReference>
<dbReference type="GO" id="GO:0008710">
    <property type="term" value="F:8-amino-7-oxononanoate synthase activity"/>
    <property type="evidence" value="ECO:0000314"/>
    <property type="project" value="UniProtKB"/>
</dbReference>
<dbReference type="GO" id="GO:0008890">
    <property type="term" value="F:glycine C-acetyltransferase activity"/>
    <property type="evidence" value="ECO:0000314"/>
    <property type="project" value="UniProtKB"/>
</dbReference>
<dbReference type="GO" id="GO:0030170">
    <property type="term" value="F:pyridoxal phosphate binding"/>
    <property type="evidence" value="ECO:0000250"/>
    <property type="project" value="UniProtKB"/>
</dbReference>
<dbReference type="GO" id="GO:0009102">
    <property type="term" value="P:biotin biosynthetic process"/>
    <property type="evidence" value="ECO:0000314"/>
    <property type="project" value="UniProtKB"/>
</dbReference>
<dbReference type="CDD" id="cd06454">
    <property type="entry name" value="KBL_like"/>
    <property type="match status" value="1"/>
</dbReference>
<dbReference type="FunFam" id="3.40.640.10:FF:000006">
    <property type="entry name" value="5-aminolevulinate synthase, mitochondrial"/>
    <property type="match status" value="1"/>
</dbReference>
<dbReference type="Gene3D" id="3.90.1150.10">
    <property type="entry name" value="Aspartate Aminotransferase, domain 1"/>
    <property type="match status" value="1"/>
</dbReference>
<dbReference type="Gene3D" id="3.40.640.10">
    <property type="entry name" value="Type I PLP-dependent aspartate aminotransferase-like (Major domain)"/>
    <property type="match status" value="1"/>
</dbReference>
<dbReference type="InterPro" id="IPR001917">
    <property type="entry name" value="Aminotrans_II_pyridoxalP_BS"/>
</dbReference>
<dbReference type="InterPro" id="IPR004839">
    <property type="entry name" value="Aminotransferase_I/II_large"/>
</dbReference>
<dbReference type="InterPro" id="IPR050087">
    <property type="entry name" value="AON_synthase_class-II"/>
</dbReference>
<dbReference type="InterPro" id="IPR010962">
    <property type="entry name" value="AONS_Archaea/Firmicutes"/>
</dbReference>
<dbReference type="InterPro" id="IPR004723">
    <property type="entry name" value="AONS_Archaea/Proteobacteria"/>
</dbReference>
<dbReference type="InterPro" id="IPR015424">
    <property type="entry name" value="PyrdxlP-dep_Trfase"/>
</dbReference>
<dbReference type="InterPro" id="IPR015421">
    <property type="entry name" value="PyrdxlP-dep_Trfase_major"/>
</dbReference>
<dbReference type="InterPro" id="IPR015422">
    <property type="entry name" value="PyrdxlP-dep_Trfase_small"/>
</dbReference>
<dbReference type="NCBIfam" id="TIGR00858">
    <property type="entry name" value="bioF"/>
    <property type="match status" value="1"/>
</dbReference>
<dbReference type="NCBIfam" id="TIGR01825">
    <property type="entry name" value="gly_Cac_T_rel"/>
    <property type="match status" value="1"/>
</dbReference>
<dbReference type="NCBIfam" id="NF005394">
    <property type="entry name" value="PRK06939.1"/>
    <property type="match status" value="1"/>
</dbReference>
<dbReference type="PANTHER" id="PTHR13693">
    <property type="entry name" value="CLASS II AMINOTRANSFERASE/8-AMINO-7-OXONONANOATE SYNTHASE"/>
    <property type="match status" value="1"/>
</dbReference>
<dbReference type="PANTHER" id="PTHR13693:SF3">
    <property type="entry name" value="LD36009P"/>
    <property type="match status" value="1"/>
</dbReference>
<dbReference type="Pfam" id="PF00155">
    <property type="entry name" value="Aminotran_1_2"/>
    <property type="match status" value="1"/>
</dbReference>
<dbReference type="SUPFAM" id="SSF53383">
    <property type="entry name" value="PLP-dependent transferases"/>
    <property type="match status" value="1"/>
</dbReference>
<dbReference type="PROSITE" id="PS00599">
    <property type="entry name" value="AA_TRANSFER_CLASS_2"/>
    <property type="match status" value="1"/>
</dbReference>
<feature type="chain" id="PRO_0000381125" description="8-amino-7-oxononanoate synthase/2-amino-3-ketobutyrate coenzyme A ligase">
    <location>
        <begin position="1"/>
        <end position="395"/>
    </location>
</feature>
<feature type="binding site" evidence="1">
    <location>
        <begin position="110"/>
        <end position="111"/>
    </location>
    <ligand>
        <name>pyridoxal 5'-phosphate</name>
        <dbReference type="ChEBI" id="CHEBI:597326"/>
    </ligand>
</feature>
<feature type="binding site" evidence="1">
    <location>
        <position position="135"/>
    </location>
    <ligand>
        <name>substrate</name>
    </ligand>
</feature>
<feature type="binding site" evidence="1">
    <location>
        <position position="182"/>
    </location>
    <ligand>
        <name>pyridoxal 5'-phosphate</name>
        <dbReference type="ChEBI" id="CHEBI:597326"/>
    </ligand>
</feature>
<feature type="binding site" evidence="1">
    <location>
        <begin position="207"/>
        <end position="210"/>
    </location>
    <ligand>
        <name>pyridoxal 5'-phosphate</name>
        <dbReference type="ChEBI" id="CHEBI:597326"/>
    </ligand>
</feature>
<feature type="binding site" evidence="1">
    <location>
        <begin position="239"/>
        <end position="242"/>
    </location>
    <ligand>
        <name>pyridoxal 5'-phosphate</name>
        <dbReference type="ChEBI" id="CHEBI:597326"/>
    </ligand>
</feature>
<feature type="binding site" evidence="1">
    <location>
        <position position="356"/>
    </location>
    <ligand>
        <name>substrate</name>
    </ligand>
</feature>
<feature type="modified residue" description="N6-(pyridoxal phosphate)lysine" evidence="3">
    <location>
        <position position="242"/>
    </location>
</feature>
<feature type="helix" evidence="4">
    <location>
        <begin position="5"/>
        <end position="19"/>
    </location>
</feature>
<feature type="strand" evidence="4">
    <location>
        <begin position="32"/>
        <end position="38"/>
    </location>
</feature>
<feature type="strand" evidence="4">
    <location>
        <begin position="41"/>
        <end position="45"/>
    </location>
</feature>
<feature type="helix" evidence="4">
    <location>
        <begin position="58"/>
        <end position="71"/>
    </location>
</feature>
<feature type="turn" evidence="4">
    <location>
        <begin position="79"/>
        <end position="82"/>
    </location>
</feature>
<feature type="helix" evidence="4">
    <location>
        <begin position="86"/>
        <end position="99"/>
    </location>
</feature>
<feature type="strand" evidence="4">
    <location>
        <begin position="101"/>
        <end position="108"/>
    </location>
</feature>
<feature type="helix" evidence="4">
    <location>
        <begin position="110"/>
        <end position="121"/>
    </location>
</feature>
<feature type="strand" evidence="4">
    <location>
        <begin position="127"/>
        <end position="131"/>
    </location>
</feature>
<feature type="helix" evidence="4">
    <location>
        <begin position="136"/>
        <end position="143"/>
    </location>
</feature>
<feature type="strand" evidence="4">
    <location>
        <begin position="147"/>
        <end position="152"/>
    </location>
</feature>
<feature type="helix" evidence="4">
    <location>
        <begin position="157"/>
        <end position="166"/>
    </location>
</feature>
<feature type="strand" evidence="4">
    <location>
        <begin position="173"/>
        <end position="180"/>
    </location>
</feature>
<feature type="turn" evidence="4">
    <location>
        <begin position="182"/>
        <end position="184"/>
    </location>
</feature>
<feature type="helix" evidence="4">
    <location>
        <begin position="190"/>
        <end position="199"/>
    </location>
</feature>
<feature type="strand" evidence="4">
    <location>
        <begin position="203"/>
        <end position="207"/>
    </location>
</feature>
<feature type="turn" evidence="4">
    <location>
        <begin position="209"/>
        <end position="214"/>
    </location>
</feature>
<feature type="helix" evidence="4">
    <location>
        <begin position="217"/>
        <end position="219"/>
    </location>
</feature>
<feature type="helix" evidence="4">
    <location>
        <begin position="222"/>
        <end position="226"/>
    </location>
</feature>
<feature type="strand" evidence="4">
    <location>
        <begin position="234"/>
        <end position="242"/>
    </location>
</feature>
<feature type="strand" evidence="4">
    <location>
        <begin position="249"/>
        <end position="253"/>
    </location>
</feature>
<feature type="helix" evidence="4">
    <location>
        <begin position="255"/>
        <end position="264"/>
    </location>
</feature>
<feature type="helix" evidence="4">
    <location>
        <begin position="266"/>
        <end position="269"/>
    </location>
</feature>
<feature type="helix" evidence="4">
    <location>
        <begin position="276"/>
        <end position="291"/>
    </location>
</feature>
<feature type="helix" evidence="4">
    <location>
        <begin position="294"/>
        <end position="313"/>
    </location>
</feature>
<feature type="strand" evidence="4">
    <location>
        <begin position="322"/>
        <end position="331"/>
    </location>
</feature>
<feature type="helix" evidence="4">
    <location>
        <begin position="332"/>
        <end position="344"/>
    </location>
</feature>
<feature type="strand" evidence="5">
    <location>
        <begin position="350"/>
        <end position="352"/>
    </location>
</feature>
<feature type="turn" evidence="4">
    <location>
        <begin position="354"/>
        <end position="356"/>
    </location>
</feature>
<feature type="strand" evidence="4">
    <location>
        <begin position="362"/>
        <end position="367"/>
    </location>
</feature>
<feature type="helix" evidence="4">
    <location>
        <begin position="374"/>
        <end position="390"/>
    </location>
</feature>